<organism>
    <name type="scientific">Methanocaldococcus jannaschii (strain ATCC 43067 / DSM 2661 / JAL-1 / JCM 10045 / NBRC 100440)</name>
    <name type="common">Methanococcus jannaschii</name>
    <dbReference type="NCBI Taxonomy" id="243232"/>
    <lineage>
        <taxon>Archaea</taxon>
        <taxon>Methanobacteriati</taxon>
        <taxon>Methanobacteriota</taxon>
        <taxon>Methanomada group</taxon>
        <taxon>Methanococci</taxon>
        <taxon>Methanococcales</taxon>
        <taxon>Methanocaldococcaceae</taxon>
        <taxon>Methanocaldococcus</taxon>
    </lineage>
</organism>
<protein>
    <recommendedName>
        <fullName>UPF0104 membrane protein MJ1078</fullName>
    </recommendedName>
</protein>
<sequence>MFINSLVPAKLGDVYRGYLLKKKTNESISLGVGTVFIERVFDLVAMISLLFISAYLSFKSDIPKEILYSIKWGVIIILFLIILIFGFLIVNSKINLKNKKLEAILMNFEKGLKAVKLNTLPLLITLSFTGWFIEGLTVYFIFLSLNLNLEILFGVFSDLASSLLTAIPLTPSGLGVVEYALIYILKLKNIDYSGAFAVLILYRLISYFSIVLFGAIMFYIVERNILKEPKNEKY</sequence>
<proteinExistence type="inferred from homology"/>
<gene>
    <name type="ordered locus">MJ1078</name>
</gene>
<comment type="subcellular location">
    <subcellularLocation>
        <location evidence="2">Cell membrane</location>
        <topology evidence="2">Multi-pass membrane protein</topology>
    </subcellularLocation>
</comment>
<comment type="similarity">
    <text evidence="2">Belongs to the UPF0104 family.</text>
</comment>
<name>Y1078_METJA</name>
<reference key="1">
    <citation type="journal article" date="1996" name="Science">
        <title>Complete genome sequence of the methanogenic archaeon, Methanococcus jannaschii.</title>
        <authorList>
            <person name="Bult C.J."/>
            <person name="White O."/>
            <person name="Olsen G.J."/>
            <person name="Zhou L."/>
            <person name="Fleischmann R.D."/>
            <person name="Sutton G.G."/>
            <person name="Blake J.A."/>
            <person name="FitzGerald L.M."/>
            <person name="Clayton R.A."/>
            <person name="Gocayne J.D."/>
            <person name="Kerlavage A.R."/>
            <person name="Dougherty B.A."/>
            <person name="Tomb J.-F."/>
            <person name="Adams M.D."/>
            <person name="Reich C.I."/>
            <person name="Overbeek R."/>
            <person name="Kirkness E.F."/>
            <person name="Weinstock K.G."/>
            <person name="Merrick J.M."/>
            <person name="Glodek A."/>
            <person name="Scott J.L."/>
            <person name="Geoghagen N.S.M."/>
            <person name="Weidman J.F."/>
            <person name="Fuhrmann J.L."/>
            <person name="Nguyen D."/>
            <person name="Utterback T.R."/>
            <person name="Kelley J.M."/>
            <person name="Peterson J.D."/>
            <person name="Sadow P.W."/>
            <person name="Hanna M.C."/>
            <person name="Cotton M.D."/>
            <person name="Roberts K.M."/>
            <person name="Hurst M.A."/>
            <person name="Kaine B.P."/>
            <person name="Borodovsky M."/>
            <person name="Klenk H.-P."/>
            <person name="Fraser C.M."/>
            <person name="Smith H.O."/>
            <person name="Woese C.R."/>
            <person name="Venter J.C."/>
        </authorList>
    </citation>
    <scope>NUCLEOTIDE SEQUENCE [LARGE SCALE GENOMIC DNA]</scope>
    <source>
        <strain>ATCC 43067 / DSM 2661 / JAL-1 / JCM 10045 / NBRC 100440</strain>
    </source>
</reference>
<accession>Q58478</accession>
<dbReference type="EMBL" id="L77117">
    <property type="protein sequence ID" value="AAB99082.1"/>
    <property type="molecule type" value="Genomic_DNA"/>
</dbReference>
<dbReference type="PIR" id="E64434">
    <property type="entry name" value="E64434"/>
</dbReference>
<dbReference type="RefSeq" id="WP_010870590.1">
    <property type="nucleotide sequence ID" value="NC_000909.1"/>
</dbReference>
<dbReference type="STRING" id="243232.MJ_1078"/>
<dbReference type="PaxDb" id="243232-MJ_1078"/>
<dbReference type="EnsemblBacteria" id="AAB99082">
    <property type="protein sequence ID" value="AAB99082"/>
    <property type="gene ID" value="MJ_1078"/>
</dbReference>
<dbReference type="GeneID" id="1451974"/>
<dbReference type="KEGG" id="mja:MJ_1078"/>
<dbReference type="eggNOG" id="arCOG00899">
    <property type="taxonomic scope" value="Archaea"/>
</dbReference>
<dbReference type="HOGENOM" id="CLU_048072_3_0_2"/>
<dbReference type="InParanoid" id="Q58478"/>
<dbReference type="OrthoDB" id="351177at2157"/>
<dbReference type="PhylomeDB" id="Q58478"/>
<dbReference type="Proteomes" id="UP000000805">
    <property type="component" value="Chromosome"/>
</dbReference>
<dbReference type="GO" id="GO:0005886">
    <property type="term" value="C:plasma membrane"/>
    <property type="evidence" value="ECO:0007669"/>
    <property type="project" value="UniProtKB-SubCell"/>
</dbReference>
<dbReference type="InterPro" id="IPR022791">
    <property type="entry name" value="L-PG_synthase/AglD"/>
</dbReference>
<dbReference type="NCBIfam" id="TIGR00374">
    <property type="entry name" value="flippase-like domain"/>
    <property type="match status" value="1"/>
</dbReference>
<dbReference type="PANTHER" id="PTHR39087">
    <property type="entry name" value="UPF0104 MEMBRANE PROTEIN MJ1595"/>
    <property type="match status" value="1"/>
</dbReference>
<dbReference type="PANTHER" id="PTHR39087:SF2">
    <property type="entry name" value="UPF0104 MEMBRANE PROTEIN MJ1595"/>
    <property type="match status" value="1"/>
</dbReference>
<dbReference type="Pfam" id="PF03706">
    <property type="entry name" value="LPG_synthase_TM"/>
    <property type="match status" value="1"/>
</dbReference>
<feature type="chain" id="PRO_0000138104" description="UPF0104 membrane protein MJ1078">
    <location>
        <begin position="1"/>
        <end position="234"/>
    </location>
</feature>
<feature type="transmembrane region" description="Helical" evidence="1">
    <location>
        <begin position="32"/>
        <end position="52"/>
    </location>
</feature>
<feature type="transmembrane region" description="Helical" evidence="1">
    <location>
        <begin position="70"/>
        <end position="90"/>
    </location>
</feature>
<feature type="transmembrane region" description="Helical" evidence="1">
    <location>
        <begin position="123"/>
        <end position="143"/>
    </location>
</feature>
<feature type="transmembrane region" description="Helical" evidence="1">
    <location>
        <begin position="164"/>
        <end position="184"/>
    </location>
</feature>
<feature type="transmembrane region" description="Helical" evidence="1">
    <location>
        <begin position="198"/>
        <end position="218"/>
    </location>
</feature>
<evidence type="ECO:0000255" key="1"/>
<evidence type="ECO:0000305" key="2"/>
<keyword id="KW-1003">Cell membrane</keyword>
<keyword id="KW-0472">Membrane</keyword>
<keyword id="KW-1185">Reference proteome</keyword>
<keyword id="KW-0812">Transmembrane</keyword>
<keyword id="KW-1133">Transmembrane helix</keyword>